<protein>
    <recommendedName>
        <fullName evidence="1">5'-nucleotidase SurE</fullName>
        <ecNumber evidence="1">3.1.3.5</ecNumber>
    </recommendedName>
    <alternativeName>
        <fullName evidence="1">Nucleoside 5'-monophosphate phosphohydrolase</fullName>
    </alternativeName>
</protein>
<accession>Q0IC13</accession>
<organism>
    <name type="scientific">Synechococcus sp. (strain CC9311)</name>
    <dbReference type="NCBI Taxonomy" id="64471"/>
    <lineage>
        <taxon>Bacteria</taxon>
        <taxon>Bacillati</taxon>
        <taxon>Cyanobacteriota</taxon>
        <taxon>Cyanophyceae</taxon>
        <taxon>Synechococcales</taxon>
        <taxon>Synechococcaceae</taxon>
        <taxon>Synechococcus</taxon>
    </lineage>
</organism>
<gene>
    <name evidence="1" type="primary">surE</name>
    <name type="ordered locus">sync_0795</name>
</gene>
<name>SURE_SYNS3</name>
<evidence type="ECO:0000255" key="1">
    <source>
        <dbReference type="HAMAP-Rule" id="MF_00060"/>
    </source>
</evidence>
<keyword id="KW-0963">Cytoplasm</keyword>
<keyword id="KW-0378">Hydrolase</keyword>
<keyword id="KW-0479">Metal-binding</keyword>
<keyword id="KW-0547">Nucleotide-binding</keyword>
<keyword id="KW-1185">Reference proteome</keyword>
<sequence length="265" mass="28608">MTPLRILISNDDGVFADGIRTLAAAAAAAGHQVTVVCPDQERSATGHGLTLQTPIRAERADELFEPGIKAWACSGTPADCMKLALFELLPEKPDLVLSGINHGPNLGTDVFCSGTVAAAMEGTLEGLPAMAVSSACFQWREFQAAAHLAIQVAEAALADQWPENLLLNLNVPPCKQEAMGKLSWTRLSIRRYDEQFSPRVDPRGRTYYWLAGEAVEDFESGGDGPRDWPTDVAQIQADAPSLTPIQPELFWRGGLSSLPQLNIDQ</sequence>
<proteinExistence type="inferred from homology"/>
<dbReference type="EC" id="3.1.3.5" evidence="1"/>
<dbReference type="EMBL" id="CP000435">
    <property type="protein sequence ID" value="ABI45473.1"/>
    <property type="molecule type" value="Genomic_DNA"/>
</dbReference>
<dbReference type="RefSeq" id="WP_011618736.1">
    <property type="nucleotide sequence ID" value="NC_008319.1"/>
</dbReference>
<dbReference type="SMR" id="Q0IC13"/>
<dbReference type="STRING" id="64471.sync_0795"/>
<dbReference type="KEGG" id="syg:sync_0795"/>
<dbReference type="eggNOG" id="COG0496">
    <property type="taxonomic scope" value="Bacteria"/>
</dbReference>
<dbReference type="HOGENOM" id="CLU_045192_1_3_3"/>
<dbReference type="OrthoDB" id="9780815at2"/>
<dbReference type="Proteomes" id="UP000001961">
    <property type="component" value="Chromosome"/>
</dbReference>
<dbReference type="GO" id="GO:0005737">
    <property type="term" value="C:cytoplasm"/>
    <property type="evidence" value="ECO:0007669"/>
    <property type="project" value="UniProtKB-SubCell"/>
</dbReference>
<dbReference type="GO" id="GO:0008254">
    <property type="term" value="F:3'-nucleotidase activity"/>
    <property type="evidence" value="ECO:0007669"/>
    <property type="project" value="TreeGrafter"/>
</dbReference>
<dbReference type="GO" id="GO:0008253">
    <property type="term" value="F:5'-nucleotidase activity"/>
    <property type="evidence" value="ECO:0007669"/>
    <property type="project" value="UniProtKB-UniRule"/>
</dbReference>
<dbReference type="GO" id="GO:0004309">
    <property type="term" value="F:exopolyphosphatase activity"/>
    <property type="evidence" value="ECO:0007669"/>
    <property type="project" value="TreeGrafter"/>
</dbReference>
<dbReference type="GO" id="GO:0046872">
    <property type="term" value="F:metal ion binding"/>
    <property type="evidence" value="ECO:0007669"/>
    <property type="project" value="UniProtKB-UniRule"/>
</dbReference>
<dbReference type="GO" id="GO:0000166">
    <property type="term" value="F:nucleotide binding"/>
    <property type="evidence" value="ECO:0007669"/>
    <property type="project" value="UniProtKB-KW"/>
</dbReference>
<dbReference type="Gene3D" id="3.40.1210.10">
    <property type="entry name" value="Survival protein SurE-like phosphatase/nucleotidase"/>
    <property type="match status" value="1"/>
</dbReference>
<dbReference type="HAMAP" id="MF_00060">
    <property type="entry name" value="SurE"/>
    <property type="match status" value="1"/>
</dbReference>
<dbReference type="InterPro" id="IPR030048">
    <property type="entry name" value="SurE"/>
</dbReference>
<dbReference type="InterPro" id="IPR002828">
    <property type="entry name" value="SurE-like_Pase/nucleotidase"/>
</dbReference>
<dbReference type="InterPro" id="IPR036523">
    <property type="entry name" value="SurE-like_sf"/>
</dbReference>
<dbReference type="NCBIfam" id="NF001490">
    <property type="entry name" value="PRK00346.1-4"/>
    <property type="match status" value="1"/>
</dbReference>
<dbReference type="NCBIfam" id="NF001492">
    <property type="entry name" value="PRK00346.2-2"/>
    <property type="match status" value="1"/>
</dbReference>
<dbReference type="NCBIfam" id="TIGR00087">
    <property type="entry name" value="surE"/>
    <property type="match status" value="1"/>
</dbReference>
<dbReference type="PANTHER" id="PTHR30457">
    <property type="entry name" value="5'-NUCLEOTIDASE SURE"/>
    <property type="match status" value="1"/>
</dbReference>
<dbReference type="PANTHER" id="PTHR30457:SF12">
    <property type="entry name" value="5'_3'-NUCLEOTIDASE SURE"/>
    <property type="match status" value="1"/>
</dbReference>
<dbReference type="Pfam" id="PF01975">
    <property type="entry name" value="SurE"/>
    <property type="match status" value="1"/>
</dbReference>
<dbReference type="SUPFAM" id="SSF64167">
    <property type="entry name" value="SurE-like"/>
    <property type="match status" value="1"/>
</dbReference>
<reference key="1">
    <citation type="journal article" date="2006" name="Proc. Natl. Acad. Sci. U.S.A.">
        <title>Genome sequence of Synechococcus CC9311: insights into adaptation to a coastal environment.</title>
        <authorList>
            <person name="Palenik B."/>
            <person name="Ren Q."/>
            <person name="Dupont C.L."/>
            <person name="Myers G.S."/>
            <person name="Heidelberg J.F."/>
            <person name="Badger J.H."/>
            <person name="Madupu R."/>
            <person name="Nelson W.C."/>
            <person name="Brinkac L.M."/>
            <person name="Dodson R.J."/>
            <person name="Durkin A.S."/>
            <person name="Daugherty S.C."/>
            <person name="Sullivan S.A."/>
            <person name="Khouri H."/>
            <person name="Mohamoud Y."/>
            <person name="Halpin R."/>
            <person name="Paulsen I.T."/>
        </authorList>
    </citation>
    <scope>NUCLEOTIDE SEQUENCE [LARGE SCALE GENOMIC DNA]</scope>
    <source>
        <strain>CC9311</strain>
    </source>
</reference>
<comment type="function">
    <text evidence="1">Nucleotidase that shows phosphatase activity on nucleoside 5'-monophosphates.</text>
</comment>
<comment type="catalytic activity">
    <reaction evidence="1">
        <text>a ribonucleoside 5'-phosphate + H2O = a ribonucleoside + phosphate</text>
        <dbReference type="Rhea" id="RHEA:12484"/>
        <dbReference type="ChEBI" id="CHEBI:15377"/>
        <dbReference type="ChEBI" id="CHEBI:18254"/>
        <dbReference type="ChEBI" id="CHEBI:43474"/>
        <dbReference type="ChEBI" id="CHEBI:58043"/>
        <dbReference type="EC" id="3.1.3.5"/>
    </reaction>
</comment>
<comment type="cofactor">
    <cofactor evidence="1">
        <name>a divalent metal cation</name>
        <dbReference type="ChEBI" id="CHEBI:60240"/>
    </cofactor>
    <text evidence="1">Binds 1 divalent metal cation per subunit.</text>
</comment>
<comment type="subcellular location">
    <subcellularLocation>
        <location evidence="1">Cytoplasm</location>
    </subcellularLocation>
</comment>
<comment type="similarity">
    <text evidence="1">Belongs to the SurE nucleotidase family.</text>
</comment>
<feature type="chain" id="PRO_0000335286" description="5'-nucleotidase SurE">
    <location>
        <begin position="1"/>
        <end position="265"/>
    </location>
</feature>
<feature type="binding site" evidence="1">
    <location>
        <position position="11"/>
    </location>
    <ligand>
        <name>a divalent metal cation</name>
        <dbReference type="ChEBI" id="CHEBI:60240"/>
    </ligand>
</feature>
<feature type="binding site" evidence="1">
    <location>
        <position position="12"/>
    </location>
    <ligand>
        <name>a divalent metal cation</name>
        <dbReference type="ChEBI" id="CHEBI:60240"/>
    </ligand>
</feature>
<feature type="binding site" evidence="1">
    <location>
        <position position="43"/>
    </location>
    <ligand>
        <name>a divalent metal cation</name>
        <dbReference type="ChEBI" id="CHEBI:60240"/>
    </ligand>
</feature>
<feature type="binding site" evidence="1">
    <location>
        <position position="101"/>
    </location>
    <ligand>
        <name>a divalent metal cation</name>
        <dbReference type="ChEBI" id="CHEBI:60240"/>
    </ligand>
</feature>